<dbReference type="EC" id="2.7.4.6" evidence="1"/>
<dbReference type="EMBL" id="AE000511">
    <property type="protein sequence ID" value="AAD07268.1"/>
    <property type="molecule type" value="Genomic_DNA"/>
</dbReference>
<dbReference type="PIR" id="F64544">
    <property type="entry name" value="F64544"/>
</dbReference>
<dbReference type="RefSeq" id="NP_206997.1">
    <property type="nucleotide sequence ID" value="NC_000915.1"/>
</dbReference>
<dbReference type="RefSeq" id="WP_000813744.1">
    <property type="nucleotide sequence ID" value="NC_018939.1"/>
</dbReference>
<dbReference type="SMR" id="P56075"/>
<dbReference type="FunCoup" id="P56075">
    <property type="interactions" value="355"/>
</dbReference>
<dbReference type="STRING" id="85962.HP_0198"/>
<dbReference type="PaxDb" id="85962-C694_00985"/>
<dbReference type="EnsemblBacteria" id="AAD07268">
    <property type="protein sequence ID" value="AAD07268"/>
    <property type="gene ID" value="HP_0198"/>
</dbReference>
<dbReference type="KEGG" id="heo:C694_00985"/>
<dbReference type="KEGG" id="hpy:HP_0198"/>
<dbReference type="PATRIC" id="fig|85962.47.peg.213"/>
<dbReference type="eggNOG" id="COG0105">
    <property type="taxonomic scope" value="Bacteria"/>
</dbReference>
<dbReference type="InParanoid" id="P56075"/>
<dbReference type="OrthoDB" id="9801161at2"/>
<dbReference type="PhylomeDB" id="P56075"/>
<dbReference type="Proteomes" id="UP000000429">
    <property type="component" value="Chromosome"/>
</dbReference>
<dbReference type="GO" id="GO:0005737">
    <property type="term" value="C:cytoplasm"/>
    <property type="evidence" value="ECO:0007669"/>
    <property type="project" value="UniProtKB-SubCell"/>
</dbReference>
<dbReference type="GO" id="GO:0005524">
    <property type="term" value="F:ATP binding"/>
    <property type="evidence" value="ECO:0007669"/>
    <property type="project" value="UniProtKB-UniRule"/>
</dbReference>
<dbReference type="GO" id="GO:0046872">
    <property type="term" value="F:metal ion binding"/>
    <property type="evidence" value="ECO:0007669"/>
    <property type="project" value="UniProtKB-KW"/>
</dbReference>
<dbReference type="GO" id="GO:0004550">
    <property type="term" value="F:nucleoside diphosphate kinase activity"/>
    <property type="evidence" value="ECO:0007669"/>
    <property type="project" value="UniProtKB-UniRule"/>
</dbReference>
<dbReference type="GO" id="GO:0006241">
    <property type="term" value="P:CTP biosynthetic process"/>
    <property type="evidence" value="ECO:0007669"/>
    <property type="project" value="UniProtKB-UniRule"/>
</dbReference>
<dbReference type="GO" id="GO:0006183">
    <property type="term" value="P:GTP biosynthetic process"/>
    <property type="evidence" value="ECO:0007669"/>
    <property type="project" value="UniProtKB-UniRule"/>
</dbReference>
<dbReference type="GO" id="GO:0006163">
    <property type="term" value="P:purine nucleotide metabolic process"/>
    <property type="evidence" value="ECO:0000318"/>
    <property type="project" value="GO_Central"/>
</dbReference>
<dbReference type="GO" id="GO:0006220">
    <property type="term" value="P:pyrimidine nucleotide metabolic process"/>
    <property type="evidence" value="ECO:0000318"/>
    <property type="project" value="GO_Central"/>
</dbReference>
<dbReference type="GO" id="GO:0006228">
    <property type="term" value="P:UTP biosynthetic process"/>
    <property type="evidence" value="ECO:0007669"/>
    <property type="project" value="UniProtKB-UniRule"/>
</dbReference>
<dbReference type="CDD" id="cd04413">
    <property type="entry name" value="NDPk_I"/>
    <property type="match status" value="1"/>
</dbReference>
<dbReference type="FunFam" id="3.30.70.141:FF:000001">
    <property type="entry name" value="Nucleoside diphosphate kinase"/>
    <property type="match status" value="1"/>
</dbReference>
<dbReference type="Gene3D" id="3.30.70.141">
    <property type="entry name" value="Nucleoside diphosphate kinase-like domain"/>
    <property type="match status" value="1"/>
</dbReference>
<dbReference type="HAMAP" id="MF_00451">
    <property type="entry name" value="NDP_kinase"/>
    <property type="match status" value="1"/>
</dbReference>
<dbReference type="InterPro" id="IPR034907">
    <property type="entry name" value="NDK-like_dom"/>
</dbReference>
<dbReference type="InterPro" id="IPR036850">
    <property type="entry name" value="NDK-like_dom_sf"/>
</dbReference>
<dbReference type="InterPro" id="IPR001564">
    <property type="entry name" value="Nucleoside_diP_kinase"/>
</dbReference>
<dbReference type="InterPro" id="IPR023005">
    <property type="entry name" value="Nucleoside_diP_kinase_AS"/>
</dbReference>
<dbReference type="NCBIfam" id="NF001908">
    <property type="entry name" value="PRK00668.1"/>
    <property type="match status" value="1"/>
</dbReference>
<dbReference type="PANTHER" id="PTHR46161">
    <property type="entry name" value="NUCLEOSIDE DIPHOSPHATE KINASE"/>
    <property type="match status" value="1"/>
</dbReference>
<dbReference type="PANTHER" id="PTHR46161:SF3">
    <property type="entry name" value="NUCLEOSIDE DIPHOSPHATE KINASE DDB_G0292928-RELATED"/>
    <property type="match status" value="1"/>
</dbReference>
<dbReference type="Pfam" id="PF00334">
    <property type="entry name" value="NDK"/>
    <property type="match status" value="1"/>
</dbReference>
<dbReference type="PRINTS" id="PR01243">
    <property type="entry name" value="NUCDPKINASE"/>
</dbReference>
<dbReference type="SMART" id="SM00562">
    <property type="entry name" value="NDK"/>
    <property type="match status" value="1"/>
</dbReference>
<dbReference type="SUPFAM" id="SSF54919">
    <property type="entry name" value="Nucleoside diphosphate kinase, NDK"/>
    <property type="match status" value="1"/>
</dbReference>
<dbReference type="PROSITE" id="PS00469">
    <property type="entry name" value="NDPK"/>
    <property type="match status" value="1"/>
</dbReference>
<dbReference type="PROSITE" id="PS51374">
    <property type="entry name" value="NDPK_LIKE"/>
    <property type="match status" value="1"/>
</dbReference>
<keyword id="KW-0067">ATP-binding</keyword>
<keyword id="KW-0963">Cytoplasm</keyword>
<keyword id="KW-0418">Kinase</keyword>
<keyword id="KW-0460">Magnesium</keyword>
<keyword id="KW-0479">Metal-binding</keyword>
<keyword id="KW-0546">Nucleotide metabolism</keyword>
<keyword id="KW-0547">Nucleotide-binding</keyword>
<keyword id="KW-0597">Phosphoprotein</keyword>
<keyword id="KW-1185">Reference proteome</keyword>
<keyword id="KW-0808">Transferase</keyword>
<organism>
    <name type="scientific">Helicobacter pylori (strain ATCC 700392 / 26695)</name>
    <name type="common">Campylobacter pylori</name>
    <dbReference type="NCBI Taxonomy" id="85962"/>
    <lineage>
        <taxon>Bacteria</taxon>
        <taxon>Pseudomonadati</taxon>
        <taxon>Campylobacterota</taxon>
        <taxon>Epsilonproteobacteria</taxon>
        <taxon>Campylobacterales</taxon>
        <taxon>Helicobacteraceae</taxon>
        <taxon>Helicobacter</taxon>
    </lineage>
</organism>
<evidence type="ECO:0000255" key="1">
    <source>
        <dbReference type="HAMAP-Rule" id="MF_00451"/>
    </source>
</evidence>
<evidence type="ECO:0000305" key="2"/>
<reference key="1">
    <citation type="journal article" date="1997" name="Nature">
        <title>The complete genome sequence of the gastric pathogen Helicobacter pylori.</title>
        <authorList>
            <person name="Tomb J.-F."/>
            <person name="White O."/>
            <person name="Kerlavage A.R."/>
            <person name="Clayton R.A."/>
            <person name="Sutton G.G."/>
            <person name="Fleischmann R.D."/>
            <person name="Ketchum K.A."/>
            <person name="Klenk H.-P."/>
            <person name="Gill S.R."/>
            <person name="Dougherty B.A."/>
            <person name="Nelson K.E."/>
            <person name="Quackenbush J."/>
            <person name="Zhou L."/>
            <person name="Kirkness E.F."/>
            <person name="Peterson S.N."/>
            <person name="Loftus B.J."/>
            <person name="Richardson D.L."/>
            <person name="Dodson R.J."/>
            <person name="Khalak H.G."/>
            <person name="Glodek A."/>
            <person name="McKenney K."/>
            <person name="FitzGerald L.M."/>
            <person name="Lee N."/>
            <person name="Adams M.D."/>
            <person name="Hickey E.K."/>
            <person name="Berg D.E."/>
            <person name="Gocayne J.D."/>
            <person name="Utterback T.R."/>
            <person name="Peterson J.D."/>
            <person name="Kelley J.M."/>
            <person name="Cotton M.D."/>
            <person name="Weidman J.F."/>
            <person name="Fujii C."/>
            <person name="Bowman C."/>
            <person name="Watthey L."/>
            <person name="Wallin E."/>
            <person name="Hayes W.S."/>
            <person name="Borodovsky M."/>
            <person name="Karp P.D."/>
            <person name="Smith H.O."/>
            <person name="Fraser C.M."/>
            <person name="Venter J.C."/>
        </authorList>
    </citation>
    <scope>NUCLEOTIDE SEQUENCE [LARGE SCALE GENOMIC DNA]</scope>
    <source>
        <strain>ATCC 700392 / 26695</strain>
    </source>
</reference>
<gene>
    <name evidence="1" type="primary">ndk</name>
    <name type="ordered locus">HP_0198</name>
</gene>
<sequence>MKQRTLSIIKPDALKKKVVGKIIDRFESNGLEVVAMKRLHLSVKDAENFYAIHRERPFFKDLIEFMVSGPVVVMVLEGKDAVAKNRDLMGATDPKLAQKGTIRADFAESIDANAVHGSDSLENAHNEIAFFFAARDL</sequence>
<protein>
    <recommendedName>
        <fullName evidence="1">Nucleoside diphosphate kinase</fullName>
        <shortName evidence="1">NDK</shortName>
        <shortName evidence="1">NDP kinase</shortName>
        <ecNumber evidence="1">2.7.4.6</ecNumber>
    </recommendedName>
    <alternativeName>
        <fullName evidence="1">Nucleoside-2-P kinase</fullName>
    </alternativeName>
</protein>
<accession>P56075</accession>
<proteinExistence type="inferred from homology"/>
<name>NDK_HELPY</name>
<feature type="chain" id="PRO_0000136992" description="Nucleoside diphosphate kinase">
    <location>
        <begin position="1"/>
        <end position="137"/>
    </location>
</feature>
<feature type="active site" description="Pros-phosphohistidine intermediate" evidence="1">
    <location>
        <position position="116"/>
    </location>
</feature>
<feature type="binding site" evidence="1">
    <location>
        <position position="10"/>
    </location>
    <ligand>
        <name>ATP</name>
        <dbReference type="ChEBI" id="CHEBI:30616"/>
    </ligand>
</feature>
<feature type="binding site" evidence="1">
    <location>
        <position position="58"/>
    </location>
    <ligand>
        <name>ATP</name>
        <dbReference type="ChEBI" id="CHEBI:30616"/>
    </ligand>
</feature>
<feature type="binding site" evidence="1">
    <location>
        <position position="86"/>
    </location>
    <ligand>
        <name>ATP</name>
        <dbReference type="ChEBI" id="CHEBI:30616"/>
    </ligand>
</feature>
<feature type="binding site" evidence="1">
    <location>
        <position position="92"/>
    </location>
    <ligand>
        <name>ATP</name>
        <dbReference type="ChEBI" id="CHEBI:30616"/>
    </ligand>
</feature>
<feature type="binding site" evidence="1">
    <location>
        <position position="103"/>
    </location>
    <ligand>
        <name>ATP</name>
        <dbReference type="ChEBI" id="CHEBI:30616"/>
    </ligand>
</feature>
<feature type="binding site" evidence="1">
    <location>
        <position position="113"/>
    </location>
    <ligand>
        <name>ATP</name>
        <dbReference type="ChEBI" id="CHEBI:30616"/>
    </ligand>
</feature>
<comment type="function">
    <text evidence="1">Major role in the synthesis of nucleoside triphosphates other than ATP. The ATP gamma phosphate is transferred to the NDP beta phosphate via a ping-pong mechanism, using a phosphorylated active-site intermediate.</text>
</comment>
<comment type="catalytic activity">
    <reaction evidence="1">
        <text>a 2'-deoxyribonucleoside 5'-diphosphate + ATP = a 2'-deoxyribonucleoside 5'-triphosphate + ADP</text>
        <dbReference type="Rhea" id="RHEA:44640"/>
        <dbReference type="ChEBI" id="CHEBI:30616"/>
        <dbReference type="ChEBI" id="CHEBI:61560"/>
        <dbReference type="ChEBI" id="CHEBI:73316"/>
        <dbReference type="ChEBI" id="CHEBI:456216"/>
        <dbReference type="EC" id="2.7.4.6"/>
    </reaction>
</comment>
<comment type="catalytic activity">
    <reaction evidence="1">
        <text>a ribonucleoside 5'-diphosphate + ATP = a ribonucleoside 5'-triphosphate + ADP</text>
        <dbReference type="Rhea" id="RHEA:18113"/>
        <dbReference type="ChEBI" id="CHEBI:30616"/>
        <dbReference type="ChEBI" id="CHEBI:57930"/>
        <dbReference type="ChEBI" id="CHEBI:61557"/>
        <dbReference type="ChEBI" id="CHEBI:456216"/>
        <dbReference type="EC" id="2.7.4.6"/>
    </reaction>
</comment>
<comment type="cofactor">
    <cofactor evidence="1">
        <name>Mg(2+)</name>
        <dbReference type="ChEBI" id="CHEBI:18420"/>
    </cofactor>
</comment>
<comment type="subunit">
    <text evidence="1">Homotetramer.</text>
</comment>
<comment type="subcellular location">
    <subcellularLocation>
        <location evidence="1">Cytoplasm</location>
    </subcellularLocation>
</comment>
<comment type="similarity">
    <text evidence="1 2">Belongs to the NDK family.</text>
</comment>